<dbReference type="EMBL" id="CP000527">
    <property type="protein sequence ID" value="ABM29212.1"/>
    <property type="molecule type" value="Genomic_DNA"/>
</dbReference>
<dbReference type="RefSeq" id="WP_010938075.1">
    <property type="nucleotide sequence ID" value="NC_008751.1"/>
</dbReference>
<dbReference type="SMR" id="A1VFJ6"/>
<dbReference type="KEGG" id="dvl:Dvul_2196"/>
<dbReference type="HOGENOM" id="CLU_084338_1_3_7"/>
<dbReference type="Proteomes" id="UP000009173">
    <property type="component" value="Chromosome"/>
</dbReference>
<dbReference type="GO" id="GO:0005886">
    <property type="term" value="C:plasma membrane"/>
    <property type="evidence" value="ECO:0007669"/>
    <property type="project" value="UniProtKB-SubCell"/>
</dbReference>
<dbReference type="GO" id="GO:0045259">
    <property type="term" value="C:proton-transporting ATP synthase complex"/>
    <property type="evidence" value="ECO:0007669"/>
    <property type="project" value="UniProtKB-KW"/>
</dbReference>
<dbReference type="GO" id="GO:0005524">
    <property type="term" value="F:ATP binding"/>
    <property type="evidence" value="ECO:0007669"/>
    <property type="project" value="UniProtKB-UniRule"/>
</dbReference>
<dbReference type="GO" id="GO:0046933">
    <property type="term" value="F:proton-transporting ATP synthase activity, rotational mechanism"/>
    <property type="evidence" value="ECO:0007669"/>
    <property type="project" value="UniProtKB-UniRule"/>
</dbReference>
<dbReference type="CDD" id="cd12152">
    <property type="entry name" value="F1-ATPase_delta"/>
    <property type="match status" value="1"/>
</dbReference>
<dbReference type="FunFam" id="1.20.5.440:FF:000001">
    <property type="entry name" value="ATP synthase epsilon chain"/>
    <property type="match status" value="1"/>
</dbReference>
<dbReference type="Gene3D" id="1.20.5.440">
    <property type="entry name" value="ATP synthase delta/epsilon subunit, C-terminal domain"/>
    <property type="match status" value="1"/>
</dbReference>
<dbReference type="Gene3D" id="2.60.15.10">
    <property type="entry name" value="F0F1 ATP synthase delta/epsilon subunit, N-terminal"/>
    <property type="match status" value="1"/>
</dbReference>
<dbReference type="HAMAP" id="MF_00530">
    <property type="entry name" value="ATP_synth_epsil_bac"/>
    <property type="match status" value="1"/>
</dbReference>
<dbReference type="InterPro" id="IPR036794">
    <property type="entry name" value="ATP_F1_dsu/esu_C_sf"/>
</dbReference>
<dbReference type="InterPro" id="IPR001469">
    <property type="entry name" value="ATP_synth_F1_dsu/esu"/>
</dbReference>
<dbReference type="InterPro" id="IPR020546">
    <property type="entry name" value="ATP_synth_F1_dsu/esu_N"/>
</dbReference>
<dbReference type="InterPro" id="IPR020547">
    <property type="entry name" value="ATP_synth_F1_esu_C"/>
</dbReference>
<dbReference type="InterPro" id="IPR036771">
    <property type="entry name" value="ATPsynth_dsu/esu_N"/>
</dbReference>
<dbReference type="NCBIfam" id="TIGR01216">
    <property type="entry name" value="ATP_synt_epsi"/>
    <property type="match status" value="1"/>
</dbReference>
<dbReference type="NCBIfam" id="NF001846">
    <property type="entry name" value="PRK00571.1-3"/>
    <property type="match status" value="1"/>
</dbReference>
<dbReference type="NCBIfam" id="NF009980">
    <property type="entry name" value="PRK13446.1"/>
    <property type="match status" value="1"/>
</dbReference>
<dbReference type="PANTHER" id="PTHR13822">
    <property type="entry name" value="ATP SYNTHASE DELTA/EPSILON CHAIN"/>
    <property type="match status" value="1"/>
</dbReference>
<dbReference type="PANTHER" id="PTHR13822:SF10">
    <property type="entry name" value="ATP SYNTHASE EPSILON CHAIN, CHLOROPLASTIC"/>
    <property type="match status" value="1"/>
</dbReference>
<dbReference type="Pfam" id="PF00401">
    <property type="entry name" value="ATP-synt_DE"/>
    <property type="match status" value="1"/>
</dbReference>
<dbReference type="Pfam" id="PF02823">
    <property type="entry name" value="ATP-synt_DE_N"/>
    <property type="match status" value="1"/>
</dbReference>
<dbReference type="SUPFAM" id="SSF46604">
    <property type="entry name" value="Epsilon subunit of F1F0-ATP synthase C-terminal domain"/>
    <property type="match status" value="1"/>
</dbReference>
<dbReference type="SUPFAM" id="SSF51344">
    <property type="entry name" value="Epsilon subunit of F1F0-ATP synthase N-terminal domain"/>
    <property type="match status" value="1"/>
</dbReference>
<feature type="chain" id="PRO_1000056479" description="ATP synthase epsilon chain">
    <location>
        <begin position="1"/>
        <end position="134"/>
    </location>
</feature>
<proteinExistence type="inferred from homology"/>
<sequence>MEKSLHLEIVTPDKLVLSEQVDYVGAPGFEGEFGVLPSHIPFLSALAIGSLYYKANGKTHHVFVSGGFAEVSDNKVTVLAESAERAEDIDIDRARKAKDRAEQRLAQIKEKVDHARAQAALQRALARMRVRGNA</sequence>
<keyword id="KW-0066">ATP synthesis</keyword>
<keyword id="KW-0997">Cell inner membrane</keyword>
<keyword id="KW-1003">Cell membrane</keyword>
<keyword id="KW-0139">CF(1)</keyword>
<keyword id="KW-0375">Hydrogen ion transport</keyword>
<keyword id="KW-0406">Ion transport</keyword>
<keyword id="KW-0472">Membrane</keyword>
<keyword id="KW-0813">Transport</keyword>
<organism>
    <name type="scientific">Nitratidesulfovibrio vulgaris (strain DP4)</name>
    <name type="common">Desulfovibrio vulgaris</name>
    <dbReference type="NCBI Taxonomy" id="391774"/>
    <lineage>
        <taxon>Bacteria</taxon>
        <taxon>Pseudomonadati</taxon>
        <taxon>Thermodesulfobacteriota</taxon>
        <taxon>Desulfovibrionia</taxon>
        <taxon>Desulfovibrionales</taxon>
        <taxon>Desulfovibrionaceae</taxon>
        <taxon>Nitratidesulfovibrio</taxon>
    </lineage>
</organism>
<evidence type="ECO:0000255" key="1">
    <source>
        <dbReference type="HAMAP-Rule" id="MF_00530"/>
    </source>
</evidence>
<protein>
    <recommendedName>
        <fullName evidence="1">ATP synthase epsilon chain</fullName>
    </recommendedName>
    <alternativeName>
        <fullName evidence="1">ATP synthase F1 sector epsilon subunit</fullName>
    </alternativeName>
    <alternativeName>
        <fullName evidence="1">F-ATPase epsilon subunit</fullName>
    </alternativeName>
</protein>
<reference key="1">
    <citation type="journal article" date="2009" name="Environ. Microbiol.">
        <title>Contribution of mobile genetic elements to Desulfovibrio vulgaris genome plasticity.</title>
        <authorList>
            <person name="Walker C.B."/>
            <person name="Stolyar S."/>
            <person name="Chivian D."/>
            <person name="Pinel N."/>
            <person name="Gabster J.A."/>
            <person name="Dehal P.S."/>
            <person name="He Z."/>
            <person name="Yang Z.K."/>
            <person name="Yen H.C."/>
            <person name="Zhou J."/>
            <person name="Wall J.D."/>
            <person name="Hazen T.C."/>
            <person name="Arkin A.P."/>
            <person name="Stahl D.A."/>
        </authorList>
    </citation>
    <scope>NUCLEOTIDE SEQUENCE [LARGE SCALE GENOMIC DNA]</scope>
    <source>
        <strain>DP4</strain>
    </source>
</reference>
<comment type="function">
    <text evidence="1">Produces ATP from ADP in the presence of a proton gradient across the membrane.</text>
</comment>
<comment type="subunit">
    <text evidence="1">F-type ATPases have 2 components, CF(1) - the catalytic core - and CF(0) - the membrane proton channel. CF(1) has five subunits: alpha(3), beta(3), gamma(1), delta(1), epsilon(1). CF(0) has three main subunits: a, b and c.</text>
</comment>
<comment type="subcellular location">
    <subcellularLocation>
        <location evidence="1">Cell inner membrane</location>
        <topology evidence="1">Peripheral membrane protein</topology>
    </subcellularLocation>
</comment>
<comment type="similarity">
    <text evidence="1">Belongs to the ATPase epsilon chain family.</text>
</comment>
<accession>A1VFJ6</accession>
<name>ATPE_NITV4</name>
<gene>
    <name evidence="1" type="primary">atpC</name>
    <name type="ordered locus">Dvul_2196</name>
</gene>